<organism>
    <name type="scientific">Pseudarthrobacter chlorophenolicus (strain ATCC 700700 / DSM 12829 / CIP 107037 / JCM 12360 / KCTC 9906 / NCIMB 13794 / A6)</name>
    <name type="common">Arthrobacter chlorophenolicus</name>
    <dbReference type="NCBI Taxonomy" id="452863"/>
    <lineage>
        <taxon>Bacteria</taxon>
        <taxon>Bacillati</taxon>
        <taxon>Actinomycetota</taxon>
        <taxon>Actinomycetes</taxon>
        <taxon>Micrococcales</taxon>
        <taxon>Micrococcaceae</taxon>
        <taxon>Pseudarthrobacter</taxon>
    </lineage>
</organism>
<gene>
    <name type="ordered locus">Achl_0790</name>
</gene>
<proteinExistence type="inferred from homology"/>
<evidence type="ECO:0000250" key="1"/>
<evidence type="ECO:0000269" key="2">
    <source>
    </source>
</evidence>
<evidence type="ECO:0000305" key="3"/>
<feature type="chain" id="PRO_0000429901" description="D-galactonate dehydratase family member Achl_0790">
    <location>
        <begin position="1"/>
        <end position="409"/>
    </location>
</feature>
<feature type="binding site" evidence="1">
    <location>
        <position position="217"/>
    </location>
    <ligand>
        <name>Mg(2+)</name>
        <dbReference type="ChEBI" id="CHEBI:18420"/>
    </ligand>
</feature>
<feature type="binding site" evidence="1">
    <location>
        <position position="219"/>
    </location>
    <ligand>
        <name>D-arabinonate</name>
        <dbReference type="ChEBI" id="CHEBI:16157"/>
    </ligand>
</feature>
<feature type="binding site" evidence="1">
    <location>
        <position position="243"/>
    </location>
    <ligand>
        <name>Mg(2+)</name>
        <dbReference type="ChEBI" id="CHEBI:18420"/>
    </ligand>
</feature>
<feature type="binding site" evidence="1">
    <location>
        <position position="269"/>
    </location>
    <ligand>
        <name>D-arabinonate</name>
        <dbReference type="ChEBI" id="CHEBI:16157"/>
    </ligand>
</feature>
<feature type="binding site" evidence="1">
    <location>
        <position position="269"/>
    </location>
    <ligand>
        <name>Mg(2+)</name>
        <dbReference type="ChEBI" id="CHEBI:18420"/>
    </ligand>
</feature>
<feature type="binding site" evidence="1">
    <location>
        <position position="290"/>
    </location>
    <ligand>
        <name>D-arabinonate</name>
        <dbReference type="ChEBI" id="CHEBI:16157"/>
    </ligand>
</feature>
<feature type="binding site" evidence="1">
    <location>
        <position position="319"/>
    </location>
    <ligand>
        <name>D-arabinonate</name>
        <dbReference type="ChEBI" id="CHEBI:16157"/>
    </ligand>
</feature>
<feature type="binding site" evidence="1">
    <location>
        <position position="346"/>
    </location>
    <ligand>
        <name>D-arabinonate</name>
        <dbReference type="ChEBI" id="CHEBI:16157"/>
    </ligand>
</feature>
<comment type="function">
    <text evidence="2">Has no detectable activity with D-mannonate and with a panel of 70 other acid sugars (in vitro), in spite of the conservation of the residues that are expected to be important for catalytic activity and cofactor binding. May have evolved a divergent function.</text>
</comment>
<comment type="similarity">
    <text evidence="3">Belongs to the mandelate racemase/muconate lactonizing enzyme family. GalD subfamily.</text>
</comment>
<dbReference type="EMBL" id="CP001341">
    <property type="protein sequence ID" value="ACL38785.1"/>
    <property type="molecule type" value="Genomic_DNA"/>
</dbReference>
<dbReference type="RefSeq" id="WP_015936010.1">
    <property type="nucleotide sequence ID" value="NC_011886.1"/>
</dbReference>
<dbReference type="SMR" id="B8HCK2"/>
<dbReference type="STRING" id="452863.Achl_0790"/>
<dbReference type="KEGG" id="ach:Achl_0790"/>
<dbReference type="eggNOG" id="COG4948">
    <property type="taxonomic scope" value="Bacteria"/>
</dbReference>
<dbReference type="HOGENOM" id="CLU_030273_6_1_11"/>
<dbReference type="OrthoDB" id="9802699at2"/>
<dbReference type="Proteomes" id="UP000002505">
    <property type="component" value="Chromosome"/>
</dbReference>
<dbReference type="GO" id="GO:0000287">
    <property type="term" value="F:magnesium ion binding"/>
    <property type="evidence" value="ECO:0000250"/>
    <property type="project" value="UniProtKB"/>
</dbReference>
<dbReference type="GO" id="GO:0008927">
    <property type="term" value="F:mannonate dehydratase activity"/>
    <property type="evidence" value="ECO:0007669"/>
    <property type="project" value="UniProtKB-ARBA"/>
</dbReference>
<dbReference type="GO" id="GO:0009063">
    <property type="term" value="P:amino acid catabolic process"/>
    <property type="evidence" value="ECO:0007669"/>
    <property type="project" value="InterPro"/>
</dbReference>
<dbReference type="GO" id="GO:0016052">
    <property type="term" value="P:carbohydrate catabolic process"/>
    <property type="evidence" value="ECO:0007669"/>
    <property type="project" value="UniProtKB-ARBA"/>
</dbReference>
<dbReference type="FunFam" id="3.20.20.120:FF:000015">
    <property type="entry name" value="Bifunctional D-altronate/D-mannonate dehydratase"/>
    <property type="match status" value="1"/>
</dbReference>
<dbReference type="Gene3D" id="3.20.20.120">
    <property type="entry name" value="Enolase-like C-terminal domain"/>
    <property type="match status" value="1"/>
</dbReference>
<dbReference type="Gene3D" id="3.30.390.10">
    <property type="entry name" value="Enolase-like, N-terminal domain"/>
    <property type="match status" value="1"/>
</dbReference>
<dbReference type="InterPro" id="IPR034589">
    <property type="entry name" value="D-mannonate_dehydratase-like"/>
</dbReference>
<dbReference type="InterPro" id="IPR053379">
    <property type="entry name" value="D-mannonate_dehydratase_GalD"/>
</dbReference>
<dbReference type="InterPro" id="IPR034593">
    <property type="entry name" value="DgoD-like"/>
</dbReference>
<dbReference type="InterPro" id="IPR036849">
    <property type="entry name" value="Enolase-like_C_sf"/>
</dbReference>
<dbReference type="InterPro" id="IPR029017">
    <property type="entry name" value="Enolase-like_N"/>
</dbReference>
<dbReference type="InterPro" id="IPR029065">
    <property type="entry name" value="Enolase_C-like"/>
</dbReference>
<dbReference type="InterPro" id="IPR018110">
    <property type="entry name" value="Mandel_Rmase/mucon_lact_enz_CS"/>
</dbReference>
<dbReference type="InterPro" id="IPR013342">
    <property type="entry name" value="Mandelate_racemase_C"/>
</dbReference>
<dbReference type="InterPro" id="IPR013341">
    <property type="entry name" value="Mandelate_racemase_N_dom"/>
</dbReference>
<dbReference type="NCBIfam" id="NF043051">
    <property type="entry name" value="ManoateDhtManD"/>
    <property type="match status" value="1"/>
</dbReference>
<dbReference type="NCBIfam" id="NF011654">
    <property type="entry name" value="PRK15072.1"/>
    <property type="match status" value="1"/>
</dbReference>
<dbReference type="PANTHER" id="PTHR48080">
    <property type="entry name" value="D-GALACTONATE DEHYDRATASE-RELATED"/>
    <property type="match status" value="1"/>
</dbReference>
<dbReference type="PANTHER" id="PTHR48080:SF6">
    <property type="entry name" value="STARVATION-SENSING PROTEIN RSPA"/>
    <property type="match status" value="1"/>
</dbReference>
<dbReference type="Pfam" id="PF13378">
    <property type="entry name" value="MR_MLE_C"/>
    <property type="match status" value="1"/>
</dbReference>
<dbReference type="Pfam" id="PF02746">
    <property type="entry name" value="MR_MLE_N"/>
    <property type="match status" value="1"/>
</dbReference>
<dbReference type="SFLD" id="SFLDS00001">
    <property type="entry name" value="Enolase"/>
    <property type="match status" value="1"/>
</dbReference>
<dbReference type="SFLD" id="SFLDG00033">
    <property type="entry name" value="mannonate_dehydratase"/>
    <property type="match status" value="1"/>
</dbReference>
<dbReference type="SMART" id="SM00922">
    <property type="entry name" value="MR_MLE"/>
    <property type="match status" value="1"/>
</dbReference>
<dbReference type="SUPFAM" id="SSF51604">
    <property type="entry name" value="Enolase C-terminal domain-like"/>
    <property type="match status" value="1"/>
</dbReference>
<dbReference type="SUPFAM" id="SSF54826">
    <property type="entry name" value="Enolase N-terminal domain-like"/>
    <property type="match status" value="1"/>
</dbReference>
<dbReference type="PROSITE" id="PS00908">
    <property type="entry name" value="MR_MLE_1"/>
    <property type="match status" value="1"/>
</dbReference>
<keyword id="KW-0460">Magnesium</keyword>
<keyword id="KW-0479">Metal-binding</keyword>
<protein>
    <recommendedName>
        <fullName>D-galactonate dehydratase family member Achl_0790</fullName>
    </recommendedName>
</protein>
<reference key="1">
    <citation type="submission" date="2009-01" db="EMBL/GenBank/DDBJ databases">
        <title>Complete sequence of chromosome of Arthrobacter chlorophenolicus A6.</title>
        <authorList>
            <consortium name="US DOE Joint Genome Institute"/>
            <person name="Lucas S."/>
            <person name="Copeland A."/>
            <person name="Lapidus A."/>
            <person name="Glavina del Rio T."/>
            <person name="Tice H."/>
            <person name="Bruce D."/>
            <person name="Goodwin L."/>
            <person name="Pitluck S."/>
            <person name="Goltsman E."/>
            <person name="Clum A."/>
            <person name="Larimer F."/>
            <person name="Land M."/>
            <person name="Hauser L."/>
            <person name="Kyrpides N."/>
            <person name="Mikhailova N."/>
            <person name="Jansson J."/>
            <person name="Richardson P."/>
        </authorList>
    </citation>
    <scope>NUCLEOTIDE SEQUENCE [LARGE SCALE GENOMIC DNA]</scope>
    <source>
        <strain>ATCC 700700 / DSM 12829 / CIP 107037 / JCM 12360 / KCTC 9906 / NCIMB 13794 / A6</strain>
    </source>
</reference>
<reference key="2">
    <citation type="journal article" date="2014" name="Biochemistry">
        <title>Discovery of function in the enolase superfamily: D-mannonate and D-gluconate dehydratases in the D-mannonate dehydratase subgroup.</title>
        <authorList>
            <person name="Wichelecki D.J."/>
            <person name="Balthazor B.M."/>
            <person name="Chau A.C."/>
            <person name="Vetting M.W."/>
            <person name="Fedorov A.A."/>
            <person name="Fedorov E.V."/>
            <person name="Lukk T."/>
            <person name="Patskovsky Y.V."/>
            <person name="Stead M.B."/>
            <person name="Hillerich B.S."/>
            <person name="Seidel R.D."/>
            <person name="Almo S.C."/>
            <person name="Gerlt J.A."/>
        </authorList>
    </citation>
    <scope>FUNCTION</scope>
    <scope>LACK OF D-MANNONATE DEHYDRATASE ACTIVITY</scope>
</reference>
<name>IMAND_PSECP</name>
<accession>B8HCK2</accession>
<sequence length="409" mass="45479">MKIIAADVFVTSPSRNFVTLRITTEDGVTGIGDATLNGRELAVAAYLKEHVAQLLIGKDPHRIEDTWQFLYRSSYWRRGPVTMAAIAAVDMALWDIKGKVAGMPVYQLLGGASRNGLRAYGHASGADIPSLFDSVREHLELGYKSIRIQTAVPGIKAVYGVAAQAQASGERYDYEPAGRGAFPVEEDWDTRAYLRHLPSVFEAVRNEFGPEIPLLHDGHHRMTPIQAAKLGKALEPYDLFWLEDCTPAENQEALRLVRQHTTTPLAIGEIFNTVYDYQTIIKEQLIDYVRAASTHFGGISPLKKVMDFAAQYQIKSGFHGPTDISPVGFAAQLHVGLAIHNYGIQEYMQHSDKTNEVFHQSMTFKDGYLHPGDEPGIGVEFNEEAAAAFPYQQAYLPYNRLVDGTVHDW</sequence>